<proteinExistence type="inferred from homology"/>
<feature type="chain" id="PRO_0000307053" description="Aspartate 1-decarboxylase beta chain" evidence="1">
    <location>
        <begin position="1"/>
        <end position="24"/>
    </location>
</feature>
<feature type="chain" id="PRO_0000307054" description="Aspartate 1-decarboxylase alpha chain" evidence="1">
    <location>
        <begin position="25"/>
        <end position="126"/>
    </location>
</feature>
<feature type="active site" description="Schiff-base intermediate with substrate; via pyruvic acid" evidence="1">
    <location>
        <position position="25"/>
    </location>
</feature>
<feature type="active site" description="Proton donor" evidence="1">
    <location>
        <position position="58"/>
    </location>
</feature>
<feature type="binding site" evidence="1">
    <location>
        <position position="57"/>
    </location>
    <ligand>
        <name>substrate</name>
    </ligand>
</feature>
<feature type="binding site" evidence="1">
    <location>
        <begin position="73"/>
        <end position="75"/>
    </location>
    <ligand>
        <name>substrate</name>
    </ligand>
</feature>
<feature type="modified residue" description="Pyruvic acid (Ser)" evidence="1">
    <location>
        <position position="25"/>
    </location>
</feature>
<reference key="1">
    <citation type="journal article" date="2008" name="Proc. Natl. Acad. Sci. U.S.A.">
        <title>Nitrogen fixation island and rhizosphere competence traits in the genome of root-associated Pseudomonas stutzeri A1501.</title>
        <authorList>
            <person name="Yan Y."/>
            <person name="Yang J."/>
            <person name="Dou Y."/>
            <person name="Chen M."/>
            <person name="Ping S."/>
            <person name="Peng J."/>
            <person name="Lu W."/>
            <person name="Zhang W."/>
            <person name="Yao Z."/>
            <person name="Li H."/>
            <person name="Liu W."/>
            <person name="He S."/>
            <person name="Geng L."/>
            <person name="Zhang X."/>
            <person name="Yang F."/>
            <person name="Yu H."/>
            <person name="Zhan Y."/>
            <person name="Li D."/>
            <person name="Lin Z."/>
            <person name="Wang Y."/>
            <person name="Elmerich C."/>
            <person name="Lin M."/>
            <person name="Jin Q."/>
        </authorList>
    </citation>
    <scope>NUCLEOTIDE SEQUENCE [LARGE SCALE GENOMIC DNA]</scope>
    <source>
        <strain>A1501</strain>
    </source>
</reference>
<dbReference type="EC" id="4.1.1.11" evidence="1"/>
<dbReference type="EMBL" id="CP000304">
    <property type="protein sequence ID" value="ABP80929.1"/>
    <property type="molecule type" value="Genomic_DNA"/>
</dbReference>
<dbReference type="RefSeq" id="WP_011914360.1">
    <property type="nucleotide sequence ID" value="NC_009434.1"/>
</dbReference>
<dbReference type="SMR" id="A4VPM8"/>
<dbReference type="KEGG" id="psa:PST_3298"/>
<dbReference type="eggNOG" id="COG0853">
    <property type="taxonomic scope" value="Bacteria"/>
</dbReference>
<dbReference type="HOGENOM" id="CLU_115305_2_1_6"/>
<dbReference type="UniPathway" id="UPA00028">
    <property type="reaction ID" value="UER00002"/>
</dbReference>
<dbReference type="Proteomes" id="UP000000233">
    <property type="component" value="Chromosome"/>
</dbReference>
<dbReference type="GO" id="GO:0005829">
    <property type="term" value="C:cytosol"/>
    <property type="evidence" value="ECO:0007669"/>
    <property type="project" value="TreeGrafter"/>
</dbReference>
<dbReference type="GO" id="GO:0004068">
    <property type="term" value="F:aspartate 1-decarboxylase activity"/>
    <property type="evidence" value="ECO:0007669"/>
    <property type="project" value="UniProtKB-UniRule"/>
</dbReference>
<dbReference type="GO" id="GO:0006523">
    <property type="term" value="P:alanine biosynthetic process"/>
    <property type="evidence" value="ECO:0007669"/>
    <property type="project" value="InterPro"/>
</dbReference>
<dbReference type="GO" id="GO:0015940">
    <property type="term" value="P:pantothenate biosynthetic process"/>
    <property type="evidence" value="ECO:0007669"/>
    <property type="project" value="UniProtKB-UniRule"/>
</dbReference>
<dbReference type="CDD" id="cd06919">
    <property type="entry name" value="Asp_decarbox"/>
    <property type="match status" value="1"/>
</dbReference>
<dbReference type="Gene3D" id="2.40.40.20">
    <property type="match status" value="1"/>
</dbReference>
<dbReference type="HAMAP" id="MF_00446">
    <property type="entry name" value="PanD"/>
    <property type="match status" value="1"/>
</dbReference>
<dbReference type="InterPro" id="IPR009010">
    <property type="entry name" value="Asp_de-COase-like_dom_sf"/>
</dbReference>
<dbReference type="InterPro" id="IPR003190">
    <property type="entry name" value="Asp_decarbox"/>
</dbReference>
<dbReference type="NCBIfam" id="TIGR00223">
    <property type="entry name" value="panD"/>
    <property type="match status" value="1"/>
</dbReference>
<dbReference type="PANTHER" id="PTHR21012">
    <property type="entry name" value="ASPARTATE 1-DECARBOXYLASE"/>
    <property type="match status" value="1"/>
</dbReference>
<dbReference type="PANTHER" id="PTHR21012:SF0">
    <property type="entry name" value="ASPARTATE 1-DECARBOXYLASE"/>
    <property type="match status" value="1"/>
</dbReference>
<dbReference type="Pfam" id="PF02261">
    <property type="entry name" value="Asp_decarbox"/>
    <property type="match status" value="1"/>
</dbReference>
<dbReference type="PIRSF" id="PIRSF006246">
    <property type="entry name" value="Asp_decarbox"/>
    <property type="match status" value="1"/>
</dbReference>
<dbReference type="SUPFAM" id="SSF50692">
    <property type="entry name" value="ADC-like"/>
    <property type="match status" value="1"/>
</dbReference>
<sequence length="126" mass="13838">MHAIMLKAKLHRAQVTHSVLDYEGSCAIDGEWLDLAGIREYEQIQIYNVDNGERFTTYAIRGEEGSRIISVNGAAAHKAGVGHRLIICAYAHYSEAELANFKPHVLYMGADGELSHTSNAIPVQVA</sequence>
<gene>
    <name evidence="1" type="primary">panD</name>
    <name type="ordered locus">PST_3298</name>
</gene>
<evidence type="ECO:0000255" key="1">
    <source>
        <dbReference type="HAMAP-Rule" id="MF_00446"/>
    </source>
</evidence>
<organism>
    <name type="scientific">Stutzerimonas stutzeri (strain A1501)</name>
    <name type="common">Pseudomonas stutzeri</name>
    <dbReference type="NCBI Taxonomy" id="379731"/>
    <lineage>
        <taxon>Bacteria</taxon>
        <taxon>Pseudomonadati</taxon>
        <taxon>Pseudomonadota</taxon>
        <taxon>Gammaproteobacteria</taxon>
        <taxon>Pseudomonadales</taxon>
        <taxon>Pseudomonadaceae</taxon>
        <taxon>Stutzerimonas</taxon>
    </lineage>
</organism>
<name>PAND_STUS1</name>
<accession>A4VPM8</accession>
<comment type="function">
    <text evidence="1">Catalyzes the pyruvoyl-dependent decarboxylation of aspartate to produce beta-alanine.</text>
</comment>
<comment type="catalytic activity">
    <reaction evidence="1">
        <text>L-aspartate + H(+) = beta-alanine + CO2</text>
        <dbReference type="Rhea" id="RHEA:19497"/>
        <dbReference type="ChEBI" id="CHEBI:15378"/>
        <dbReference type="ChEBI" id="CHEBI:16526"/>
        <dbReference type="ChEBI" id="CHEBI:29991"/>
        <dbReference type="ChEBI" id="CHEBI:57966"/>
        <dbReference type="EC" id="4.1.1.11"/>
    </reaction>
</comment>
<comment type="cofactor">
    <cofactor evidence="1">
        <name>pyruvate</name>
        <dbReference type="ChEBI" id="CHEBI:15361"/>
    </cofactor>
    <text evidence="1">Binds 1 pyruvoyl group covalently per subunit.</text>
</comment>
<comment type="pathway">
    <text evidence="1">Cofactor biosynthesis; (R)-pantothenate biosynthesis; beta-alanine from L-aspartate: step 1/1.</text>
</comment>
<comment type="subunit">
    <text evidence="1">Heterooctamer of four alpha and four beta subunits.</text>
</comment>
<comment type="subcellular location">
    <subcellularLocation>
        <location evidence="1">Cytoplasm</location>
    </subcellularLocation>
</comment>
<comment type="PTM">
    <text evidence="1">Is synthesized initially as an inactive proenzyme, which is activated by self-cleavage at a specific serine bond to produce a beta-subunit with a hydroxyl group at its C-terminus and an alpha-subunit with a pyruvoyl group at its N-terminus.</text>
</comment>
<comment type="similarity">
    <text evidence="1">Belongs to the PanD family.</text>
</comment>
<protein>
    <recommendedName>
        <fullName evidence="1">Aspartate 1-decarboxylase</fullName>
        <ecNumber evidence="1">4.1.1.11</ecNumber>
    </recommendedName>
    <alternativeName>
        <fullName evidence="1">Aspartate alpha-decarboxylase</fullName>
    </alternativeName>
    <component>
        <recommendedName>
            <fullName evidence="1">Aspartate 1-decarboxylase beta chain</fullName>
        </recommendedName>
    </component>
    <component>
        <recommendedName>
            <fullName evidence="1">Aspartate 1-decarboxylase alpha chain</fullName>
        </recommendedName>
    </component>
</protein>
<keyword id="KW-0068">Autocatalytic cleavage</keyword>
<keyword id="KW-0963">Cytoplasm</keyword>
<keyword id="KW-0210">Decarboxylase</keyword>
<keyword id="KW-0456">Lyase</keyword>
<keyword id="KW-0566">Pantothenate biosynthesis</keyword>
<keyword id="KW-0670">Pyruvate</keyword>
<keyword id="KW-1185">Reference proteome</keyword>
<keyword id="KW-0704">Schiff base</keyword>
<keyword id="KW-0865">Zymogen</keyword>